<name>DUT_XYLFT</name>
<feature type="chain" id="PRO_0000182922" description="Deoxyuridine 5'-triphosphate nucleotidohydrolase">
    <location>
        <begin position="1"/>
        <end position="155"/>
    </location>
</feature>
<feature type="binding site" evidence="1">
    <location>
        <begin position="74"/>
        <end position="76"/>
    </location>
    <ligand>
        <name>substrate</name>
    </ligand>
</feature>
<feature type="binding site" evidence="1">
    <location>
        <position position="87"/>
    </location>
    <ligand>
        <name>substrate</name>
    </ligand>
</feature>
<feature type="binding site" evidence="1">
    <location>
        <begin position="91"/>
        <end position="93"/>
    </location>
    <ligand>
        <name>substrate</name>
    </ligand>
</feature>
<keyword id="KW-0378">Hydrolase</keyword>
<keyword id="KW-0460">Magnesium</keyword>
<keyword id="KW-0479">Metal-binding</keyword>
<keyword id="KW-0546">Nucleotide metabolism</keyword>
<keyword id="KW-1185">Reference proteome</keyword>
<accession>Q87F19</accession>
<dbReference type="EC" id="3.6.1.23" evidence="1"/>
<dbReference type="EMBL" id="AE009442">
    <property type="protein sequence ID" value="AAO28018.1"/>
    <property type="molecule type" value="Genomic_DNA"/>
</dbReference>
<dbReference type="RefSeq" id="WP_004087579.1">
    <property type="nucleotide sequence ID" value="NC_004556.1"/>
</dbReference>
<dbReference type="SMR" id="Q87F19"/>
<dbReference type="GeneID" id="93903810"/>
<dbReference type="KEGG" id="xft:PD_0119"/>
<dbReference type="HOGENOM" id="CLU_068508_1_1_6"/>
<dbReference type="UniPathway" id="UPA00610">
    <property type="reaction ID" value="UER00666"/>
</dbReference>
<dbReference type="Proteomes" id="UP000002516">
    <property type="component" value="Chromosome"/>
</dbReference>
<dbReference type="GO" id="GO:0004170">
    <property type="term" value="F:dUTP diphosphatase activity"/>
    <property type="evidence" value="ECO:0007669"/>
    <property type="project" value="UniProtKB-UniRule"/>
</dbReference>
<dbReference type="GO" id="GO:0000287">
    <property type="term" value="F:magnesium ion binding"/>
    <property type="evidence" value="ECO:0007669"/>
    <property type="project" value="UniProtKB-UniRule"/>
</dbReference>
<dbReference type="GO" id="GO:0006226">
    <property type="term" value="P:dUMP biosynthetic process"/>
    <property type="evidence" value="ECO:0007669"/>
    <property type="project" value="UniProtKB-UniRule"/>
</dbReference>
<dbReference type="GO" id="GO:0046081">
    <property type="term" value="P:dUTP catabolic process"/>
    <property type="evidence" value="ECO:0007669"/>
    <property type="project" value="InterPro"/>
</dbReference>
<dbReference type="CDD" id="cd07557">
    <property type="entry name" value="trimeric_dUTPase"/>
    <property type="match status" value="1"/>
</dbReference>
<dbReference type="FunFam" id="2.70.40.10:FF:000002">
    <property type="entry name" value="dUTP diphosphatase"/>
    <property type="match status" value="1"/>
</dbReference>
<dbReference type="Gene3D" id="2.70.40.10">
    <property type="match status" value="1"/>
</dbReference>
<dbReference type="HAMAP" id="MF_00116">
    <property type="entry name" value="dUTPase_bact"/>
    <property type="match status" value="1"/>
</dbReference>
<dbReference type="InterPro" id="IPR008181">
    <property type="entry name" value="dUTPase"/>
</dbReference>
<dbReference type="InterPro" id="IPR029054">
    <property type="entry name" value="dUTPase-like"/>
</dbReference>
<dbReference type="InterPro" id="IPR036157">
    <property type="entry name" value="dUTPase-like_sf"/>
</dbReference>
<dbReference type="InterPro" id="IPR033704">
    <property type="entry name" value="dUTPase_trimeric"/>
</dbReference>
<dbReference type="NCBIfam" id="TIGR00576">
    <property type="entry name" value="dut"/>
    <property type="match status" value="1"/>
</dbReference>
<dbReference type="NCBIfam" id="NF001862">
    <property type="entry name" value="PRK00601.1"/>
    <property type="match status" value="1"/>
</dbReference>
<dbReference type="PANTHER" id="PTHR11241">
    <property type="entry name" value="DEOXYURIDINE 5'-TRIPHOSPHATE NUCLEOTIDOHYDROLASE"/>
    <property type="match status" value="1"/>
</dbReference>
<dbReference type="PANTHER" id="PTHR11241:SF0">
    <property type="entry name" value="DEOXYURIDINE 5'-TRIPHOSPHATE NUCLEOTIDOHYDROLASE"/>
    <property type="match status" value="1"/>
</dbReference>
<dbReference type="Pfam" id="PF00692">
    <property type="entry name" value="dUTPase"/>
    <property type="match status" value="1"/>
</dbReference>
<dbReference type="SUPFAM" id="SSF51283">
    <property type="entry name" value="dUTPase-like"/>
    <property type="match status" value="1"/>
</dbReference>
<reference key="1">
    <citation type="journal article" date="2003" name="J. Bacteriol.">
        <title>Comparative analyses of the complete genome sequences of Pierce's disease and citrus variegated chlorosis strains of Xylella fastidiosa.</title>
        <authorList>
            <person name="Van Sluys M.A."/>
            <person name="de Oliveira M.C."/>
            <person name="Monteiro-Vitorello C.B."/>
            <person name="Miyaki C.Y."/>
            <person name="Furlan L.R."/>
            <person name="Camargo L.E.A."/>
            <person name="da Silva A.C.R."/>
            <person name="Moon D.H."/>
            <person name="Takita M.A."/>
            <person name="Lemos E.G.M."/>
            <person name="Machado M.A."/>
            <person name="Ferro M.I.T."/>
            <person name="da Silva F.R."/>
            <person name="Goldman M.H.S."/>
            <person name="Goldman G.H."/>
            <person name="Lemos M.V.F."/>
            <person name="El-Dorry H."/>
            <person name="Tsai S.M."/>
            <person name="Carrer H."/>
            <person name="Carraro D.M."/>
            <person name="de Oliveira R.C."/>
            <person name="Nunes L.R."/>
            <person name="Siqueira W.J."/>
            <person name="Coutinho L.L."/>
            <person name="Kimura E.T."/>
            <person name="Ferro E.S."/>
            <person name="Harakava R."/>
            <person name="Kuramae E.E."/>
            <person name="Marino C.L."/>
            <person name="Giglioti E."/>
            <person name="Abreu I.L."/>
            <person name="Alves L.M.C."/>
            <person name="do Amaral A.M."/>
            <person name="Baia G.S."/>
            <person name="Blanco S.R."/>
            <person name="Brito M.S."/>
            <person name="Cannavan F.S."/>
            <person name="Celestino A.V."/>
            <person name="da Cunha A.F."/>
            <person name="Fenille R.C."/>
            <person name="Ferro J.A."/>
            <person name="Formighieri E.F."/>
            <person name="Kishi L.T."/>
            <person name="Leoni S.G."/>
            <person name="Oliveira A.R."/>
            <person name="Rosa V.E. Jr."/>
            <person name="Sassaki F.T."/>
            <person name="Sena J.A.D."/>
            <person name="de Souza A.A."/>
            <person name="Truffi D."/>
            <person name="Tsukumo F."/>
            <person name="Yanai G.M."/>
            <person name="Zaros L.G."/>
            <person name="Civerolo E.L."/>
            <person name="Simpson A.J.G."/>
            <person name="Almeida N.F. Jr."/>
            <person name="Setubal J.C."/>
            <person name="Kitajima J.P."/>
        </authorList>
    </citation>
    <scope>NUCLEOTIDE SEQUENCE [LARGE SCALE GENOMIC DNA]</scope>
    <source>
        <strain>Temecula1 / ATCC 700964</strain>
    </source>
</reference>
<proteinExistence type="inferred from homology"/>
<sequence length="155" mass="16246">MSAAVKPLQIKILDPRLGTVWPLPTYATEASAGLDLRAALDAPMTLVPGDAELLSTGIAIHLVDPSLCAVVLPRSGLGHRHGIVLGNGTGLIDSDYQGPLLVSVWNRGREAFTIEPGDRIAQLVVLPIVRVVLQVVDTFVESGRGAGGFGHTGVR</sequence>
<evidence type="ECO:0000255" key="1">
    <source>
        <dbReference type="HAMAP-Rule" id="MF_00116"/>
    </source>
</evidence>
<comment type="function">
    <text evidence="1">This enzyme is involved in nucleotide metabolism: it produces dUMP, the immediate precursor of thymidine nucleotides and it decreases the intracellular concentration of dUTP so that uracil cannot be incorporated into DNA.</text>
</comment>
<comment type="catalytic activity">
    <reaction evidence="1">
        <text>dUTP + H2O = dUMP + diphosphate + H(+)</text>
        <dbReference type="Rhea" id="RHEA:10248"/>
        <dbReference type="ChEBI" id="CHEBI:15377"/>
        <dbReference type="ChEBI" id="CHEBI:15378"/>
        <dbReference type="ChEBI" id="CHEBI:33019"/>
        <dbReference type="ChEBI" id="CHEBI:61555"/>
        <dbReference type="ChEBI" id="CHEBI:246422"/>
        <dbReference type="EC" id="3.6.1.23"/>
    </reaction>
</comment>
<comment type="cofactor">
    <cofactor evidence="1">
        <name>Mg(2+)</name>
        <dbReference type="ChEBI" id="CHEBI:18420"/>
    </cofactor>
</comment>
<comment type="pathway">
    <text evidence="1">Pyrimidine metabolism; dUMP biosynthesis; dUMP from dCTP (dUTP route): step 2/2.</text>
</comment>
<comment type="similarity">
    <text evidence="1">Belongs to the dUTPase family.</text>
</comment>
<protein>
    <recommendedName>
        <fullName evidence="1">Deoxyuridine 5'-triphosphate nucleotidohydrolase</fullName>
        <shortName evidence="1">dUTPase</shortName>
        <ecNumber evidence="1">3.6.1.23</ecNumber>
    </recommendedName>
    <alternativeName>
        <fullName evidence="1">dUTP pyrophosphatase</fullName>
    </alternativeName>
</protein>
<organism>
    <name type="scientific">Xylella fastidiosa (strain Temecula1 / ATCC 700964)</name>
    <dbReference type="NCBI Taxonomy" id="183190"/>
    <lineage>
        <taxon>Bacteria</taxon>
        <taxon>Pseudomonadati</taxon>
        <taxon>Pseudomonadota</taxon>
        <taxon>Gammaproteobacteria</taxon>
        <taxon>Lysobacterales</taxon>
        <taxon>Lysobacteraceae</taxon>
        <taxon>Xylella</taxon>
    </lineage>
</organism>
<gene>
    <name evidence="1" type="primary">dut</name>
    <name type="synonym">dnaS</name>
    <name type="ordered locus">PD_0119</name>
</gene>